<evidence type="ECO:0000256" key="1">
    <source>
        <dbReference type="SAM" id="MobiDB-lite"/>
    </source>
</evidence>
<evidence type="ECO:0000305" key="2"/>
<proteinExistence type="evidence at transcript level"/>
<name>RL27A_TRYBB</name>
<accession>O15883</accession>
<feature type="chain" id="PRO_0000104896" description="Large ribosomal subunit protein uL15">
    <location>
        <begin position="1"/>
        <end position="145"/>
    </location>
</feature>
<feature type="region of interest" description="Disordered" evidence="1">
    <location>
        <begin position="20"/>
        <end position="39"/>
    </location>
</feature>
<organism>
    <name type="scientific">Trypanosoma brucei brucei</name>
    <dbReference type="NCBI Taxonomy" id="5702"/>
    <lineage>
        <taxon>Eukaryota</taxon>
        <taxon>Discoba</taxon>
        <taxon>Euglenozoa</taxon>
        <taxon>Kinetoplastea</taxon>
        <taxon>Metakinetoplastina</taxon>
        <taxon>Trypanosomatida</taxon>
        <taxon>Trypanosomatidae</taxon>
        <taxon>Trypanosoma</taxon>
    </lineage>
</organism>
<keyword id="KW-0687">Ribonucleoprotein</keyword>
<keyword id="KW-0689">Ribosomal protein</keyword>
<dbReference type="EMBL" id="U96757">
    <property type="protein sequence ID" value="AAB62182.1"/>
    <property type="molecule type" value="mRNA"/>
</dbReference>
<dbReference type="SMR" id="O15883"/>
<dbReference type="GO" id="GO:0005737">
    <property type="term" value="C:cytoplasm"/>
    <property type="evidence" value="ECO:0000314"/>
    <property type="project" value="GeneDB"/>
</dbReference>
<dbReference type="GO" id="GO:0022625">
    <property type="term" value="C:cytosolic large ribosomal subunit"/>
    <property type="evidence" value="ECO:0007669"/>
    <property type="project" value="TreeGrafter"/>
</dbReference>
<dbReference type="GO" id="GO:0005730">
    <property type="term" value="C:nucleolus"/>
    <property type="evidence" value="ECO:0000314"/>
    <property type="project" value="GeneDB"/>
</dbReference>
<dbReference type="GO" id="GO:0003723">
    <property type="term" value="F:RNA binding"/>
    <property type="evidence" value="ECO:0000247"/>
    <property type="project" value="GeneDB"/>
</dbReference>
<dbReference type="GO" id="GO:0003735">
    <property type="term" value="F:structural constituent of ribosome"/>
    <property type="evidence" value="ECO:0000255"/>
    <property type="project" value="GeneDB"/>
</dbReference>
<dbReference type="GO" id="GO:0006412">
    <property type="term" value="P:translation"/>
    <property type="evidence" value="ECO:0000255"/>
    <property type="project" value="GeneDB"/>
</dbReference>
<dbReference type="FunFam" id="3.100.10.10:FF:000015">
    <property type="entry name" value="60S ribosomal protein L27A/L29"/>
    <property type="match status" value="1"/>
</dbReference>
<dbReference type="Gene3D" id="3.100.10.10">
    <property type="match status" value="1"/>
</dbReference>
<dbReference type="HAMAP" id="MF_01341">
    <property type="entry name" value="Ribosomal_uL15"/>
    <property type="match status" value="1"/>
</dbReference>
<dbReference type="InterPro" id="IPR030878">
    <property type="entry name" value="Ribosomal_uL15"/>
</dbReference>
<dbReference type="InterPro" id="IPR021131">
    <property type="entry name" value="Ribosomal_uL15/eL18"/>
</dbReference>
<dbReference type="InterPro" id="IPR036227">
    <property type="entry name" value="Ribosomal_uL15/eL18_sf"/>
</dbReference>
<dbReference type="PANTHER" id="PTHR11721">
    <property type="entry name" value="60S RIBOSOMAL PROTEIN L27A"/>
    <property type="match status" value="1"/>
</dbReference>
<dbReference type="PANTHER" id="PTHR11721:SF3">
    <property type="entry name" value="LARGE RIBOSOMAL SUBUNIT PROTEIN UL15"/>
    <property type="match status" value="1"/>
</dbReference>
<dbReference type="Pfam" id="PF00828">
    <property type="entry name" value="Ribosomal_L27A"/>
    <property type="match status" value="1"/>
</dbReference>
<dbReference type="SUPFAM" id="SSF52080">
    <property type="entry name" value="Ribosomal proteins L15p and L18e"/>
    <property type="match status" value="1"/>
</dbReference>
<sequence>MPTRFKKTRHQRGSTFCGYGRVGKHRKHPSGRGNAGGEHHHRINFRKYHPGYFGKCGMNHYHKKKNTTWKPTINLDNLTKLMAKDEAMKAKKGEVLPVIDLLANGYSKLLGNGHLQAPCIVKARWVSKLADKKIRKAGGAVVLQA</sequence>
<gene>
    <name type="primary">RPL27A</name>
</gene>
<reference key="1">
    <citation type="journal article" date="1999" name="Int. J. Parasitol.">
        <title>Analysis of the 60 S ribosomal protein L27a (L29) gene of Trypanosoma brucei.</title>
        <authorList>
            <person name="Brown S.V."/>
            <person name="Williams N."/>
        </authorList>
    </citation>
    <scope>NUCLEOTIDE SEQUENCE [MRNA]</scope>
    <source>
        <strain>Treu 667</strain>
    </source>
</reference>
<protein>
    <recommendedName>
        <fullName evidence="2">Large ribosomal subunit protein uL15</fullName>
    </recommendedName>
    <alternativeName>
        <fullName>60S ribosomal protein L27a</fullName>
    </alternativeName>
    <alternativeName>
        <fullName>L29</fullName>
    </alternativeName>
</protein>
<comment type="similarity">
    <text evidence="2">Belongs to the universal ribosomal protein uL15 family.</text>
</comment>